<accession>P65820</accession>
<accession>Q99UD7</accession>
<feature type="chain" id="PRO_0000170089" description="LexA repressor">
    <location>
        <begin position="1"/>
        <end position="207"/>
    </location>
</feature>
<feature type="DNA-binding region" description="H-T-H motif" evidence="1">
    <location>
        <begin position="28"/>
        <end position="48"/>
    </location>
</feature>
<feature type="active site" description="For autocatalytic cleavage activity" evidence="1">
    <location>
        <position position="130"/>
    </location>
</feature>
<feature type="active site" description="For autocatalytic cleavage activity" evidence="1">
    <location>
        <position position="168"/>
    </location>
</feature>
<feature type="site" description="Cleavage; by autolysis" evidence="1">
    <location>
        <begin position="93"/>
        <end position="94"/>
    </location>
</feature>
<name>LEXA_STAAN</name>
<keyword id="KW-0068">Autocatalytic cleavage</keyword>
<keyword id="KW-0227">DNA damage</keyword>
<keyword id="KW-0234">DNA repair</keyword>
<keyword id="KW-0235">DNA replication</keyword>
<keyword id="KW-0238">DNA-binding</keyword>
<keyword id="KW-0378">Hydrolase</keyword>
<keyword id="KW-0678">Repressor</keyword>
<keyword id="KW-0742">SOS response</keyword>
<keyword id="KW-0804">Transcription</keyword>
<keyword id="KW-0805">Transcription regulation</keyword>
<sequence length="207" mass="23332">MRELTKRQSEIYNYIKQVVQMKGYPPSVREIGEAVGLASSSTVHGHLSRLEEKGYIRRDPTKPRAIEIVSDQTNDNINMEETIHVPVIGKVTAGVPITAVENIEEYFPLPEHLTSTHNSDIFILNVVGDSMIEAGILDGDKVIVRSQTIAENGDIIVAMTEEDEATVKRFYKEKNRYRLQPENSTMEPIYLDNVAVIGKVIGLYREM</sequence>
<protein>
    <recommendedName>
        <fullName evidence="1">LexA repressor</fullName>
        <ecNumber evidence="1">3.4.21.88</ecNumber>
    </recommendedName>
</protein>
<organism>
    <name type="scientific">Staphylococcus aureus (strain N315)</name>
    <dbReference type="NCBI Taxonomy" id="158879"/>
    <lineage>
        <taxon>Bacteria</taxon>
        <taxon>Bacillati</taxon>
        <taxon>Bacillota</taxon>
        <taxon>Bacilli</taxon>
        <taxon>Bacillales</taxon>
        <taxon>Staphylococcaceae</taxon>
        <taxon>Staphylococcus</taxon>
    </lineage>
</organism>
<comment type="function">
    <text evidence="1">Represses a number of genes involved in the response to DNA damage (SOS response), including recA and lexA. In the presence of single-stranded DNA, RecA interacts with LexA causing an autocatalytic cleavage which disrupts the DNA-binding part of LexA, leading to derepression of the SOS regulon and eventually DNA repair.</text>
</comment>
<comment type="catalytic activity">
    <reaction evidence="1">
        <text>Hydrolysis of Ala-|-Gly bond in repressor LexA.</text>
        <dbReference type="EC" id="3.4.21.88"/>
    </reaction>
</comment>
<comment type="subunit">
    <text evidence="1">Homodimer.</text>
</comment>
<comment type="similarity">
    <text evidence="1">Belongs to the peptidase S24 family.</text>
</comment>
<gene>
    <name evidence="1" type="primary">lexA</name>
    <name type="ordered locus">SA1174</name>
</gene>
<reference key="1">
    <citation type="journal article" date="2001" name="Lancet">
        <title>Whole genome sequencing of meticillin-resistant Staphylococcus aureus.</title>
        <authorList>
            <person name="Kuroda M."/>
            <person name="Ohta T."/>
            <person name="Uchiyama I."/>
            <person name="Baba T."/>
            <person name="Yuzawa H."/>
            <person name="Kobayashi I."/>
            <person name="Cui L."/>
            <person name="Oguchi A."/>
            <person name="Aoki K."/>
            <person name="Nagai Y."/>
            <person name="Lian J.-Q."/>
            <person name="Ito T."/>
            <person name="Kanamori M."/>
            <person name="Matsumaru H."/>
            <person name="Maruyama A."/>
            <person name="Murakami H."/>
            <person name="Hosoyama A."/>
            <person name="Mizutani-Ui Y."/>
            <person name="Takahashi N.K."/>
            <person name="Sawano T."/>
            <person name="Inoue R."/>
            <person name="Kaito C."/>
            <person name="Sekimizu K."/>
            <person name="Hirakawa H."/>
            <person name="Kuhara S."/>
            <person name="Goto S."/>
            <person name="Yabuzaki J."/>
            <person name="Kanehisa M."/>
            <person name="Yamashita A."/>
            <person name="Oshima K."/>
            <person name="Furuya K."/>
            <person name="Yoshino C."/>
            <person name="Shiba T."/>
            <person name="Hattori M."/>
            <person name="Ogasawara N."/>
            <person name="Hayashi H."/>
            <person name="Hiramatsu K."/>
        </authorList>
    </citation>
    <scope>NUCLEOTIDE SEQUENCE [LARGE SCALE GENOMIC DNA]</scope>
    <source>
        <strain>N315</strain>
    </source>
</reference>
<proteinExistence type="inferred from homology"/>
<evidence type="ECO:0000255" key="1">
    <source>
        <dbReference type="HAMAP-Rule" id="MF_00015"/>
    </source>
</evidence>
<dbReference type="EC" id="3.4.21.88" evidence="1"/>
<dbReference type="EMBL" id="BA000018">
    <property type="protein sequence ID" value="BAB42432.1"/>
    <property type="molecule type" value="Genomic_DNA"/>
</dbReference>
<dbReference type="PIR" id="D89909">
    <property type="entry name" value="D89909"/>
</dbReference>
<dbReference type="RefSeq" id="WP_001208755.1">
    <property type="nucleotide sequence ID" value="NC_002745.2"/>
</dbReference>
<dbReference type="SMR" id="P65820"/>
<dbReference type="MEROPS" id="S24.001"/>
<dbReference type="EnsemblBacteria" id="BAB42432">
    <property type="protein sequence ID" value="BAB42432"/>
    <property type="gene ID" value="BAB42432"/>
</dbReference>
<dbReference type="KEGG" id="sau:SA1174"/>
<dbReference type="HOGENOM" id="CLU_066192_45_1_9"/>
<dbReference type="GO" id="GO:0003677">
    <property type="term" value="F:DNA binding"/>
    <property type="evidence" value="ECO:0007669"/>
    <property type="project" value="UniProtKB-UniRule"/>
</dbReference>
<dbReference type="GO" id="GO:0004252">
    <property type="term" value="F:serine-type endopeptidase activity"/>
    <property type="evidence" value="ECO:0007669"/>
    <property type="project" value="UniProtKB-UniRule"/>
</dbReference>
<dbReference type="GO" id="GO:0006281">
    <property type="term" value="P:DNA repair"/>
    <property type="evidence" value="ECO:0007669"/>
    <property type="project" value="UniProtKB-UniRule"/>
</dbReference>
<dbReference type="GO" id="GO:0006260">
    <property type="term" value="P:DNA replication"/>
    <property type="evidence" value="ECO:0007669"/>
    <property type="project" value="UniProtKB-UniRule"/>
</dbReference>
<dbReference type="GO" id="GO:0045892">
    <property type="term" value="P:negative regulation of DNA-templated transcription"/>
    <property type="evidence" value="ECO:0007669"/>
    <property type="project" value="UniProtKB-UniRule"/>
</dbReference>
<dbReference type="GO" id="GO:0006508">
    <property type="term" value="P:proteolysis"/>
    <property type="evidence" value="ECO:0007669"/>
    <property type="project" value="InterPro"/>
</dbReference>
<dbReference type="GO" id="GO:0009432">
    <property type="term" value="P:SOS response"/>
    <property type="evidence" value="ECO:0007669"/>
    <property type="project" value="UniProtKB-UniRule"/>
</dbReference>
<dbReference type="CDD" id="cd00090">
    <property type="entry name" value="HTH_ARSR"/>
    <property type="match status" value="1"/>
</dbReference>
<dbReference type="CDD" id="cd06529">
    <property type="entry name" value="S24_LexA-like"/>
    <property type="match status" value="1"/>
</dbReference>
<dbReference type="FunFam" id="1.10.10.10:FF:000009">
    <property type="entry name" value="LexA repressor"/>
    <property type="match status" value="1"/>
</dbReference>
<dbReference type="FunFam" id="2.10.109.10:FF:000001">
    <property type="entry name" value="LexA repressor"/>
    <property type="match status" value="1"/>
</dbReference>
<dbReference type="Gene3D" id="2.10.109.10">
    <property type="entry name" value="Umud Fragment, subunit A"/>
    <property type="match status" value="1"/>
</dbReference>
<dbReference type="Gene3D" id="1.10.10.10">
    <property type="entry name" value="Winged helix-like DNA-binding domain superfamily/Winged helix DNA-binding domain"/>
    <property type="match status" value="1"/>
</dbReference>
<dbReference type="HAMAP" id="MF_00015">
    <property type="entry name" value="LexA"/>
    <property type="match status" value="1"/>
</dbReference>
<dbReference type="InterPro" id="IPR011991">
    <property type="entry name" value="ArsR-like_HTH"/>
</dbReference>
<dbReference type="InterPro" id="IPR006200">
    <property type="entry name" value="LexA"/>
</dbReference>
<dbReference type="InterPro" id="IPR039418">
    <property type="entry name" value="LexA-like"/>
</dbReference>
<dbReference type="InterPro" id="IPR036286">
    <property type="entry name" value="LexA/Signal_pep-like_sf"/>
</dbReference>
<dbReference type="InterPro" id="IPR006199">
    <property type="entry name" value="LexA_DNA-bd_dom"/>
</dbReference>
<dbReference type="InterPro" id="IPR050077">
    <property type="entry name" value="LexA_repressor"/>
</dbReference>
<dbReference type="InterPro" id="IPR006197">
    <property type="entry name" value="Peptidase_S24_LexA"/>
</dbReference>
<dbReference type="InterPro" id="IPR015927">
    <property type="entry name" value="Peptidase_S24_S26A/B/C"/>
</dbReference>
<dbReference type="InterPro" id="IPR036388">
    <property type="entry name" value="WH-like_DNA-bd_sf"/>
</dbReference>
<dbReference type="InterPro" id="IPR036390">
    <property type="entry name" value="WH_DNA-bd_sf"/>
</dbReference>
<dbReference type="NCBIfam" id="TIGR00498">
    <property type="entry name" value="lexA"/>
    <property type="match status" value="1"/>
</dbReference>
<dbReference type="PANTHER" id="PTHR33516">
    <property type="entry name" value="LEXA REPRESSOR"/>
    <property type="match status" value="1"/>
</dbReference>
<dbReference type="PANTHER" id="PTHR33516:SF2">
    <property type="entry name" value="LEXA REPRESSOR-RELATED"/>
    <property type="match status" value="1"/>
</dbReference>
<dbReference type="Pfam" id="PF01726">
    <property type="entry name" value="LexA_DNA_bind"/>
    <property type="match status" value="1"/>
</dbReference>
<dbReference type="Pfam" id="PF00717">
    <property type="entry name" value="Peptidase_S24"/>
    <property type="match status" value="1"/>
</dbReference>
<dbReference type="PRINTS" id="PR00726">
    <property type="entry name" value="LEXASERPTASE"/>
</dbReference>
<dbReference type="SUPFAM" id="SSF51306">
    <property type="entry name" value="LexA/Signal peptidase"/>
    <property type="match status" value="1"/>
</dbReference>
<dbReference type="SUPFAM" id="SSF46785">
    <property type="entry name" value="Winged helix' DNA-binding domain"/>
    <property type="match status" value="1"/>
</dbReference>